<protein>
    <recommendedName>
        <fullName evidence="5">Synaptogyrin</fullName>
    </recommendedName>
</protein>
<keyword id="KW-0968">Cytoplasmic vesicle</keyword>
<keyword id="KW-0254">Endocytosis</keyword>
<keyword id="KW-0472">Membrane</keyword>
<keyword id="KW-1185">Reference proteome</keyword>
<keyword id="KW-0770">Synapse</keyword>
<keyword id="KW-0812">Transmembrane</keyword>
<keyword id="KW-1133">Transmembrane helix</keyword>
<proteinExistence type="evidence at protein level"/>
<gene>
    <name evidence="8" type="primary">Syngr</name>
    <name evidence="5" type="synonym">gyr</name>
    <name evidence="8" type="ORF">CG10808</name>
</gene>
<evidence type="ECO:0000255" key="1"/>
<evidence type="ECO:0000255" key="2">
    <source>
        <dbReference type="PROSITE-ProRule" id="PRU00581"/>
    </source>
</evidence>
<evidence type="ECO:0000256" key="3">
    <source>
        <dbReference type="SAM" id="MobiDB-lite"/>
    </source>
</evidence>
<evidence type="ECO:0000269" key="4">
    <source>
    </source>
</evidence>
<evidence type="ECO:0000303" key="5">
    <source>
    </source>
</evidence>
<evidence type="ECO:0000305" key="6"/>
<evidence type="ECO:0000312" key="7">
    <source>
        <dbReference type="EMBL" id="AAL49375.1"/>
    </source>
</evidence>
<evidence type="ECO:0000312" key="8">
    <source>
        <dbReference type="FlyBase" id="FBgn0033876"/>
    </source>
</evidence>
<evidence type="ECO:0000312" key="9">
    <source>
        <dbReference type="Proteomes" id="UP000000803"/>
    </source>
</evidence>
<comment type="function">
    <text evidence="4">Required for the correct formation of synaptic vesicles at nerve terminals and has a role in the regulation of the synaptic vesicle exo-endocytic cycle.</text>
</comment>
<comment type="subcellular location">
    <subcellularLocation>
        <location evidence="4">Cytoplasmic vesicle membrane</location>
        <topology evidence="1">Multi-pass membrane protein</topology>
    </subcellularLocation>
    <subcellularLocation>
        <location evidence="4">Cytoplasmic vesicle</location>
        <location evidence="4">Secretory vesicle membrane</location>
        <topology evidence="1">Multi-pass membrane protein</topology>
    </subcellularLocation>
    <subcellularLocation>
        <location evidence="4">Cytoplasmic vesicle</location>
        <location evidence="4">Secretory vesicle</location>
        <location evidence="4">Synaptic vesicle membrane</location>
        <topology evidence="1">Multi-pass membrane protein</topology>
    </subcellularLocation>
    <text evidence="4">In larvae expressed in the synaptic neuropil of the central nervous system.</text>
</comment>
<comment type="developmental stage">
    <text evidence="4">Expressed throughout the larval brain, ventral nerve cord (VNC) and neuromuscular junction (NMJ) (at protein level).</text>
</comment>
<comment type="disruption phenotype">
    <text evidence="4">No obvious phenotype. Viable and fertile with normal basic motor functions. However in type 1b boutons at the larval neuromuscular junction of some mutants (30-40%), there is an increase in the number of synaptic vesicles with a large diameter and a decrease in vesicle density under resting conditions. Resolution of synaptic vesicles from endocytic cisternae following an intense stimulation is delayed, and consequently boutons display an increased number of cisternae. Mutant larvae also show an increase in the amplitude of spontaneous miniature excitatory junctional currents (mEJCs), but normal evoked excitatory junction currents (EJCs). No effect on synaptic growth, the number of synaptic vesicle release sites and vesicle budding.</text>
</comment>
<comment type="similarity">
    <text evidence="6">Belongs to the synaptogyrin family.</text>
</comment>
<reference evidence="9" key="1">
    <citation type="journal article" date="2000" name="Science">
        <title>The genome sequence of Drosophila melanogaster.</title>
        <authorList>
            <person name="Adams M.D."/>
            <person name="Celniker S.E."/>
            <person name="Holt R.A."/>
            <person name="Evans C.A."/>
            <person name="Gocayne J.D."/>
            <person name="Amanatides P.G."/>
            <person name="Scherer S.E."/>
            <person name="Li P.W."/>
            <person name="Hoskins R.A."/>
            <person name="Galle R.F."/>
            <person name="George R.A."/>
            <person name="Lewis S.E."/>
            <person name="Richards S."/>
            <person name="Ashburner M."/>
            <person name="Henderson S.N."/>
            <person name="Sutton G.G."/>
            <person name="Wortman J.R."/>
            <person name="Yandell M.D."/>
            <person name="Zhang Q."/>
            <person name="Chen L.X."/>
            <person name="Brandon R.C."/>
            <person name="Rogers Y.-H.C."/>
            <person name="Blazej R.G."/>
            <person name="Champe M."/>
            <person name="Pfeiffer B.D."/>
            <person name="Wan K.H."/>
            <person name="Doyle C."/>
            <person name="Baxter E.G."/>
            <person name="Helt G."/>
            <person name="Nelson C.R."/>
            <person name="Miklos G.L.G."/>
            <person name="Abril J.F."/>
            <person name="Agbayani A."/>
            <person name="An H.-J."/>
            <person name="Andrews-Pfannkoch C."/>
            <person name="Baldwin D."/>
            <person name="Ballew R.M."/>
            <person name="Basu A."/>
            <person name="Baxendale J."/>
            <person name="Bayraktaroglu L."/>
            <person name="Beasley E.M."/>
            <person name="Beeson K.Y."/>
            <person name="Benos P.V."/>
            <person name="Berman B.P."/>
            <person name="Bhandari D."/>
            <person name="Bolshakov S."/>
            <person name="Borkova D."/>
            <person name="Botchan M.R."/>
            <person name="Bouck J."/>
            <person name="Brokstein P."/>
            <person name="Brottier P."/>
            <person name="Burtis K.C."/>
            <person name="Busam D.A."/>
            <person name="Butler H."/>
            <person name="Cadieu E."/>
            <person name="Center A."/>
            <person name="Chandra I."/>
            <person name="Cherry J.M."/>
            <person name="Cawley S."/>
            <person name="Dahlke C."/>
            <person name="Davenport L.B."/>
            <person name="Davies P."/>
            <person name="de Pablos B."/>
            <person name="Delcher A."/>
            <person name="Deng Z."/>
            <person name="Mays A.D."/>
            <person name="Dew I."/>
            <person name="Dietz S.M."/>
            <person name="Dodson K."/>
            <person name="Doup L.E."/>
            <person name="Downes M."/>
            <person name="Dugan-Rocha S."/>
            <person name="Dunkov B.C."/>
            <person name="Dunn P."/>
            <person name="Durbin K.J."/>
            <person name="Evangelista C.C."/>
            <person name="Ferraz C."/>
            <person name="Ferriera S."/>
            <person name="Fleischmann W."/>
            <person name="Fosler C."/>
            <person name="Gabrielian A.E."/>
            <person name="Garg N.S."/>
            <person name="Gelbart W.M."/>
            <person name="Glasser K."/>
            <person name="Glodek A."/>
            <person name="Gong F."/>
            <person name="Gorrell J.H."/>
            <person name="Gu Z."/>
            <person name="Guan P."/>
            <person name="Harris M."/>
            <person name="Harris N.L."/>
            <person name="Harvey D.A."/>
            <person name="Heiman T.J."/>
            <person name="Hernandez J.R."/>
            <person name="Houck J."/>
            <person name="Hostin D."/>
            <person name="Houston K.A."/>
            <person name="Howland T.J."/>
            <person name="Wei M.-H."/>
            <person name="Ibegwam C."/>
            <person name="Jalali M."/>
            <person name="Kalush F."/>
            <person name="Karpen G.H."/>
            <person name="Ke Z."/>
            <person name="Kennison J.A."/>
            <person name="Ketchum K.A."/>
            <person name="Kimmel B.E."/>
            <person name="Kodira C.D."/>
            <person name="Kraft C.L."/>
            <person name="Kravitz S."/>
            <person name="Kulp D."/>
            <person name="Lai Z."/>
            <person name="Lasko P."/>
            <person name="Lei Y."/>
            <person name="Levitsky A.A."/>
            <person name="Li J.H."/>
            <person name="Li Z."/>
            <person name="Liang Y."/>
            <person name="Lin X."/>
            <person name="Liu X."/>
            <person name="Mattei B."/>
            <person name="McIntosh T.C."/>
            <person name="McLeod M.P."/>
            <person name="McPherson D."/>
            <person name="Merkulov G."/>
            <person name="Milshina N.V."/>
            <person name="Mobarry C."/>
            <person name="Morris J."/>
            <person name="Moshrefi A."/>
            <person name="Mount S.M."/>
            <person name="Moy M."/>
            <person name="Murphy B."/>
            <person name="Murphy L."/>
            <person name="Muzny D.M."/>
            <person name="Nelson D.L."/>
            <person name="Nelson D.R."/>
            <person name="Nelson K.A."/>
            <person name="Nixon K."/>
            <person name="Nusskern D.R."/>
            <person name="Pacleb J.M."/>
            <person name="Palazzolo M."/>
            <person name="Pittman G.S."/>
            <person name="Pan S."/>
            <person name="Pollard J."/>
            <person name="Puri V."/>
            <person name="Reese M.G."/>
            <person name="Reinert K."/>
            <person name="Remington K."/>
            <person name="Saunders R.D.C."/>
            <person name="Scheeler F."/>
            <person name="Shen H."/>
            <person name="Shue B.C."/>
            <person name="Siden-Kiamos I."/>
            <person name="Simpson M."/>
            <person name="Skupski M.P."/>
            <person name="Smith T.J."/>
            <person name="Spier E."/>
            <person name="Spradling A.C."/>
            <person name="Stapleton M."/>
            <person name="Strong R."/>
            <person name="Sun E."/>
            <person name="Svirskas R."/>
            <person name="Tector C."/>
            <person name="Turner R."/>
            <person name="Venter E."/>
            <person name="Wang A.H."/>
            <person name="Wang X."/>
            <person name="Wang Z.-Y."/>
            <person name="Wassarman D.A."/>
            <person name="Weinstock G.M."/>
            <person name="Weissenbach J."/>
            <person name="Williams S.M."/>
            <person name="Woodage T."/>
            <person name="Worley K.C."/>
            <person name="Wu D."/>
            <person name="Yang S."/>
            <person name="Yao Q.A."/>
            <person name="Ye J."/>
            <person name="Yeh R.-F."/>
            <person name="Zaveri J.S."/>
            <person name="Zhan M."/>
            <person name="Zhang G."/>
            <person name="Zhao Q."/>
            <person name="Zheng L."/>
            <person name="Zheng X.H."/>
            <person name="Zhong F.N."/>
            <person name="Zhong W."/>
            <person name="Zhou X."/>
            <person name="Zhu S.C."/>
            <person name="Zhu X."/>
            <person name="Smith H.O."/>
            <person name="Gibbs R.A."/>
            <person name="Myers E.W."/>
            <person name="Rubin G.M."/>
            <person name="Venter J.C."/>
        </authorList>
    </citation>
    <scope>NUCLEOTIDE SEQUENCE [LARGE SCALE GENOMIC DNA]</scope>
    <source>
        <strain evidence="9">Berkeley</strain>
    </source>
</reference>
<reference evidence="9" key="2">
    <citation type="journal article" date="2002" name="Genome Biol.">
        <title>Annotation of the Drosophila melanogaster euchromatic genome: a systematic review.</title>
        <authorList>
            <person name="Misra S."/>
            <person name="Crosby M.A."/>
            <person name="Mungall C.J."/>
            <person name="Matthews B.B."/>
            <person name="Campbell K.S."/>
            <person name="Hradecky P."/>
            <person name="Huang Y."/>
            <person name="Kaminker J.S."/>
            <person name="Millburn G.H."/>
            <person name="Prochnik S.E."/>
            <person name="Smith C.D."/>
            <person name="Tupy J.L."/>
            <person name="Whitfield E.J."/>
            <person name="Bayraktaroglu L."/>
            <person name="Berman B.P."/>
            <person name="Bettencourt B.R."/>
            <person name="Celniker S.E."/>
            <person name="de Grey A.D.N.J."/>
            <person name="Drysdale R.A."/>
            <person name="Harris N.L."/>
            <person name="Richter J."/>
            <person name="Russo S."/>
            <person name="Schroeder A.J."/>
            <person name="Shu S.Q."/>
            <person name="Stapleton M."/>
            <person name="Yamada C."/>
            <person name="Ashburner M."/>
            <person name="Gelbart W.M."/>
            <person name="Rubin G.M."/>
            <person name="Lewis S.E."/>
        </authorList>
    </citation>
    <scope>GENOME REANNOTATION</scope>
    <source>
        <strain evidence="9">Berkeley</strain>
    </source>
</reference>
<reference evidence="7" key="3">
    <citation type="submission" date="2001-12" db="EMBL/GenBank/DDBJ databases">
        <authorList>
            <person name="Stapleton M."/>
            <person name="Brokstein P."/>
            <person name="Hong L."/>
            <person name="Agbayani A."/>
            <person name="Carlson J."/>
            <person name="Champe M."/>
            <person name="Chavez C."/>
            <person name="Dorsett V."/>
            <person name="Dresnek D."/>
            <person name="Farfan D."/>
            <person name="Frise E."/>
            <person name="George R."/>
            <person name="Gonzalez M."/>
            <person name="Guarin H."/>
            <person name="Kronmiller B."/>
            <person name="Li P."/>
            <person name="Liao G."/>
            <person name="Miranda A."/>
            <person name="Mungall C.J."/>
            <person name="Nunoo J."/>
            <person name="Pacleb J."/>
            <person name="Paragas V."/>
            <person name="Park S."/>
            <person name="Patel S."/>
            <person name="Phouanenavong S."/>
            <person name="Wan K."/>
            <person name="Yu C."/>
            <person name="Lewis S.E."/>
            <person name="Rubin G.M."/>
            <person name="Celniker S."/>
        </authorList>
    </citation>
    <scope>NUCLEOTIDE SEQUENCE [LARGE SCALE MRNA]</scope>
    <source>
        <strain evidence="7">Berkeley</strain>
        <tissue evidence="7">Head</tissue>
    </source>
</reference>
<reference evidence="6" key="4">
    <citation type="journal article" date="2012" name="J. Neurosci.">
        <title>Abnormal synaptic vesicle biogenesis in Drosophila synaptogyrin mutants.</title>
        <authorList>
            <person name="Stevens R.J."/>
            <person name="Akbergenova Y."/>
            <person name="Jorquera R.A."/>
            <person name="Littleton J.T."/>
        </authorList>
    </citation>
    <scope>FUNCTION</scope>
    <scope>SUBCELLULAR LOCATION</scope>
    <scope>DEVELOPMENTAL STAGE</scope>
    <scope>DISRUPTION PHENOTYPE</scope>
</reference>
<feature type="chain" id="PRO_0000438875" description="Synaptogyrin">
    <location>
        <begin position="1"/>
        <end position="241"/>
    </location>
</feature>
<feature type="transmembrane region" description="Helical" evidence="1">
    <location>
        <begin position="34"/>
        <end position="54"/>
    </location>
</feature>
<feature type="transmembrane region" description="Helical" evidence="1">
    <location>
        <begin position="81"/>
        <end position="101"/>
    </location>
</feature>
<feature type="transmembrane region" description="Helical" evidence="1">
    <location>
        <begin position="115"/>
        <end position="135"/>
    </location>
</feature>
<feature type="transmembrane region" description="Helical" evidence="1">
    <location>
        <begin position="155"/>
        <end position="175"/>
    </location>
</feature>
<feature type="domain" description="MARVEL" evidence="2">
    <location>
        <begin position="30"/>
        <end position="179"/>
    </location>
</feature>
<feature type="region of interest" description="Disordered" evidence="3">
    <location>
        <begin position="216"/>
        <end position="241"/>
    </location>
</feature>
<feature type="compositionally biased region" description="Low complexity" evidence="3">
    <location>
        <begin position="220"/>
        <end position="241"/>
    </location>
</feature>
<accession>Q7JYV2</accession>
<organism evidence="9">
    <name type="scientific">Drosophila melanogaster</name>
    <name type="common">Fruit fly</name>
    <dbReference type="NCBI Taxonomy" id="7227"/>
    <lineage>
        <taxon>Eukaryota</taxon>
        <taxon>Metazoa</taxon>
        <taxon>Ecdysozoa</taxon>
        <taxon>Arthropoda</taxon>
        <taxon>Hexapoda</taxon>
        <taxon>Insecta</taxon>
        <taxon>Pterygota</taxon>
        <taxon>Neoptera</taxon>
        <taxon>Endopterygota</taxon>
        <taxon>Diptera</taxon>
        <taxon>Brachycera</taxon>
        <taxon>Muscomorpha</taxon>
        <taxon>Ephydroidea</taxon>
        <taxon>Drosophilidae</taxon>
        <taxon>Drosophila</taxon>
        <taxon>Sophophora</taxon>
    </lineage>
</organism>
<name>SNG_DROME</name>
<sequence length="241" mass="26610">MDMLNQILSINNGGAYGGGKAGGAFDPLTFAMKPQVVIRALCWLFSVVVFGCISSEGWTEKDGKEYCLYNGDGMACKYGNMVGVFGFLASMGFMGGEFLFERMSSVKSRKRYVMADMGFSALWTFMYFVAFLYLWSQWSSSAPPPLGIGAGSMKTAIWFCLFSIVSWALCALMAYKRFLIGAGDEFTSAFETDPANVVHQQAYGYSMDNDNDQYSASPFGQPQQGGMEQQQSGMEYQQPTY</sequence>
<dbReference type="EMBL" id="AE013599">
    <property type="protein sequence ID" value="AAF58329.1"/>
    <property type="molecule type" value="Genomic_DNA"/>
</dbReference>
<dbReference type="EMBL" id="AY071753">
    <property type="protein sequence ID" value="AAL49375.1"/>
    <property type="molecule type" value="mRNA"/>
</dbReference>
<dbReference type="RefSeq" id="NP_610908.1">
    <property type="nucleotide sequence ID" value="NM_137064.3"/>
</dbReference>
<dbReference type="SMR" id="Q7JYV2"/>
<dbReference type="FunCoup" id="Q7JYV2">
    <property type="interactions" value="84"/>
</dbReference>
<dbReference type="IntAct" id="Q7JYV2">
    <property type="interactions" value="5"/>
</dbReference>
<dbReference type="STRING" id="7227.FBpp0086771"/>
<dbReference type="PaxDb" id="7227-FBpp0086771"/>
<dbReference type="DNASU" id="36533"/>
<dbReference type="EnsemblMetazoa" id="FBtr0087645">
    <property type="protein sequence ID" value="FBpp0086771"/>
    <property type="gene ID" value="FBgn0033876"/>
</dbReference>
<dbReference type="GeneID" id="36533"/>
<dbReference type="KEGG" id="dme:Dmel_CG10808"/>
<dbReference type="UCSC" id="CG10808-RA">
    <property type="organism name" value="d. melanogaster"/>
</dbReference>
<dbReference type="AGR" id="FB:FBgn0033876"/>
<dbReference type="CTD" id="36533"/>
<dbReference type="FlyBase" id="FBgn0033876">
    <property type="gene designation" value="Syngr"/>
</dbReference>
<dbReference type="VEuPathDB" id="VectorBase:FBgn0033876"/>
<dbReference type="eggNOG" id="KOG4016">
    <property type="taxonomic scope" value="Eukaryota"/>
</dbReference>
<dbReference type="GeneTree" id="ENSGT00950000182935"/>
<dbReference type="HOGENOM" id="CLU_079186_0_0_1"/>
<dbReference type="InParanoid" id="Q7JYV2"/>
<dbReference type="OMA" id="FYLWSQW"/>
<dbReference type="OrthoDB" id="10041611at2759"/>
<dbReference type="PhylomeDB" id="Q7JYV2"/>
<dbReference type="Reactome" id="R-DME-6798695">
    <property type="pathway name" value="Neutrophil degranulation"/>
</dbReference>
<dbReference type="BioGRID-ORCS" id="36533">
    <property type="hits" value="0 hits in 3 CRISPR screens"/>
</dbReference>
<dbReference type="ChiTaRS" id="Syngr">
    <property type="organism name" value="fly"/>
</dbReference>
<dbReference type="GenomeRNAi" id="36533"/>
<dbReference type="PRO" id="PR:Q7JYV2"/>
<dbReference type="Proteomes" id="UP000000803">
    <property type="component" value="Chromosome 2R"/>
</dbReference>
<dbReference type="Bgee" id="FBgn0033876">
    <property type="expression patterns" value="Expressed in centrifugal neuron C3 (Drosophila) in insect head and 131 other cell types or tissues"/>
</dbReference>
<dbReference type="GO" id="GO:0031594">
    <property type="term" value="C:neuromuscular junction"/>
    <property type="evidence" value="ECO:0000318"/>
    <property type="project" value="GO_Central"/>
</dbReference>
<dbReference type="GO" id="GO:0030672">
    <property type="term" value="C:synaptic vesicle membrane"/>
    <property type="evidence" value="ECO:0000318"/>
    <property type="project" value="GO_Central"/>
</dbReference>
<dbReference type="GO" id="GO:0006897">
    <property type="term" value="P:endocytosis"/>
    <property type="evidence" value="ECO:0007669"/>
    <property type="project" value="UniProtKB-KW"/>
</dbReference>
<dbReference type="GO" id="GO:0016079">
    <property type="term" value="P:synaptic vesicle exocytosis"/>
    <property type="evidence" value="ECO:0000250"/>
    <property type="project" value="FlyBase"/>
</dbReference>
<dbReference type="GO" id="GO:0048489">
    <property type="term" value="P:synaptic vesicle transport"/>
    <property type="evidence" value="ECO:0000315"/>
    <property type="project" value="FlyBase"/>
</dbReference>
<dbReference type="InterPro" id="IPR008253">
    <property type="entry name" value="Marvel"/>
</dbReference>
<dbReference type="InterPro" id="IPR016579">
    <property type="entry name" value="Synaptogyrin"/>
</dbReference>
<dbReference type="PANTHER" id="PTHR10838">
    <property type="entry name" value="SYNAPTOGYRIN"/>
    <property type="match status" value="1"/>
</dbReference>
<dbReference type="PANTHER" id="PTHR10838:SF20">
    <property type="entry name" value="SYNAPTOGYRIN"/>
    <property type="match status" value="1"/>
</dbReference>
<dbReference type="Pfam" id="PF01284">
    <property type="entry name" value="MARVEL"/>
    <property type="match status" value="1"/>
</dbReference>
<dbReference type="PIRSF" id="PIRSF011282">
    <property type="entry name" value="Synaptogyrin"/>
    <property type="match status" value="1"/>
</dbReference>
<dbReference type="PROSITE" id="PS51225">
    <property type="entry name" value="MARVEL"/>
    <property type="match status" value="1"/>
</dbReference>